<name>MAO1_COLP3</name>
<reference key="1">
    <citation type="journal article" date="2005" name="Proc. Natl. Acad. Sci. U.S.A.">
        <title>The psychrophilic lifestyle as revealed by the genome sequence of Colwellia psychrerythraea 34H through genomic and proteomic analyses.</title>
        <authorList>
            <person name="Methe B.A."/>
            <person name="Nelson K.E."/>
            <person name="Deming J.W."/>
            <person name="Momen B."/>
            <person name="Melamud E."/>
            <person name="Zhang X."/>
            <person name="Moult J."/>
            <person name="Madupu R."/>
            <person name="Nelson W.C."/>
            <person name="Dodson R.J."/>
            <person name="Brinkac L.M."/>
            <person name="Daugherty S.C."/>
            <person name="Durkin A.S."/>
            <person name="DeBoy R.T."/>
            <person name="Kolonay J.F."/>
            <person name="Sullivan S.A."/>
            <person name="Zhou L."/>
            <person name="Davidsen T.M."/>
            <person name="Wu M."/>
            <person name="Huston A.L."/>
            <person name="Lewis M."/>
            <person name="Weaver B."/>
            <person name="Weidman J.F."/>
            <person name="Khouri H."/>
            <person name="Utterback T.R."/>
            <person name="Feldblyum T.V."/>
            <person name="Fraser C.M."/>
        </authorList>
    </citation>
    <scope>NUCLEOTIDE SEQUENCE [LARGE SCALE GENOMIC DNA]</scope>
    <source>
        <strain>34H / ATCC BAA-681</strain>
    </source>
</reference>
<accession>Q47WB0</accession>
<feature type="chain" id="PRO_0000160214" description="NAD-dependent malic enzyme">
    <location>
        <begin position="1"/>
        <end position="562"/>
    </location>
</feature>
<feature type="active site" description="Proton donor" evidence="1">
    <location>
        <position position="101"/>
    </location>
</feature>
<feature type="active site" description="Proton acceptor" evidence="1">
    <location>
        <position position="172"/>
    </location>
</feature>
<feature type="binding site" evidence="1">
    <location>
        <position position="154"/>
    </location>
    <ligand>
        <name>NAD(+)</name>
        <dbReference type="ChEBI" id="CHEBI:57540"/>
    </ligand>
</feature>
<feature type="binding site" evidence="1">
    <location>
        <position position="243"/>
    </location>
    <ligand>
        <name>a divalent metal cation</name>
        <dbReference type="ChEBI" id="CHEBI:60240"/>
    </ligand>
</feature>
<feature type="binding site" evidence="1">
    <location>
        <position position="244"/>
    </location>
    <ligand>
        <name>a divalent metal cation</name>
        <dbReference type="ChEBI" id="CHEBI:60240"/>
    </ligand>
</feature>
<feature type="binding site" evidence="1">
    <location>
        <position position="267"/>
    </location>
    <ligand>
        <name>a divalent metal cation</name>
        <dbReference type="ChEBI" id="CHEBI:60240"/>
    </ligand>
</feature>
<feature type="binding site" evidence="1">
    <location>
        <position position="267"/>
    </location>
    <ligand>
        <name>NAD(+)</name>
        <dbReference type="ChEBI" id="CHEBI:57540"/>
    </ligand>
</feature>
<feature type="binding site" evidence="1">
    <location>
        <position position="415"/>
    </location>
    <ligand>
        <name>NAD(+)</name>
        <dbReference type="ChEBI" id="CHEBI:57540"/>
    </ligand>
</feature>
<feature type="site" description="Important for activity" evidence="1">
    <location>
        <position position="267"/>
    </location>
</feature>
<organism>
    <name type="scientific">Colwellia psychrerythraea (strain 34H / ATCC BAA-681)</name>
    <name type="common">Vibrio psychroerythus</name>
    <dbReference type="NCBI Taxonomy" id="167879"/>
    <lineage>
        <taxon>Bacteria</taxon>
        <taxon>Pseudomonadati</taxon>
        <taxon>Pseudomonadota</taxon>
        <taxon>Gammaproteobacteria</taxon>
        <taxon>Alteromonadales</taxon>
        <taxon>Colwelliaceae</taxon>
        <taxon>Colwellia</taxon>
    </lineage>
</organism>
<dbReference type="EC" id="1.1.1.38" evidence="1"/>
<dbReference type="EMBL" id="CP000083">
    <property type="protein sequence ID" value="AAZ25596.1"/>
    <property type="molecule type" value="Genomic_DNA"/>
</dbReference>
<dbReference type="RefSeq" id="WP_011044993.1">
    <property type="nucleotide sequence ID" value="NC_003910.7"/>
</dbReference>
<dbReference type="SMR" id="Q47WB0"/>
<dbReference type="STRING" id="167879.CPS_4262"/>
<dbReference type="KEGG" id="cps:CPS_4262"/>
<dbReference type="eggNOG" id="COG0281">
    <property type="taxonomic scope" value="Bacteria"/>
</dbReference>
<dbReference type="HOGENOM" id="CLU_011405_5_2_6"/>
<dbReference type="Proteomes" id="UP000000547">
    <property type="component" value="Chromosome"/>
</dbReference>
<dbReference type="GO" id="GO:0005829">
    <property type="term" value="C:cytosol"/>
    <property type="evidence" value="ECO:0007669"/>
    <property type="project" value="TreeGrafter"/>
</dbReference>
<dbReference type="GO" id="GO:0004471">
    <property type="term" value="F:malate dehydrogenase (decarboxylating) (NAD+) activity"/>
    <property type="evidence" value="ECO:0007669"/>
    <property type="project" value="UniProtKB-UniRule"/>
</dbReference>
<dbReference type="GO" id="GO:0046872">
    <property type="term" value="F:metal ion binding"/>
    <property type="evidence" value="ECO:0007669"/>
    <property type="project" value="UniProtKB-KW"/>
</dbReference>
<dbReference type="GO" id="GO:0051287">
    <property type="term" value="F:NAD binding"/>
    <property type="evidence" value="ECO:0007669"/>
    <property type="project" value="InterPro"/>
</dbReference>
<dbReference type="GO" id="GO:0008948">
    <property type="term" value="F:oxaloacetate decarboxylase activity"/>
    <property type="evidence" value="ECO:0007669"/>
    <property type="project" value="UniProtKB-UniRule"/>
</dbReference>
<dbReference type="GO" id="GO:0006108">
    <property type="term" value="P:malate metabolic process"/>
    <property type="evidence" value="ECO:0007669"/>
    <property type="project" value="TreeGrafter"/>
</dbReference>
<dbReference type="CDD" id="cd05312">
    <property type="entry name" value="NAD_bind_1_malic_enz"/>
    <property type="match status" value="1"/>
</dbReference>
<dbReference type="FunFam" id="3.40.50.10380:FF:000001">
    <property type="entry name" value="NAD-dependent malic enzyme"/>
    <property type="match status" value="1"/>
</dbReference>
<dbReference type="FunFam" id="3.40.50.720:FF:000055">
    <property type="entry name" value="NAD-dependent malic enzyme"/>
    <property type="match status" value="1"/>
</dbReference>
<dbReference type="Gene3D" id="3.40.50.10380">
    <property type="entry name" value="Malic enzyme, N-terminal domain"/>
    <property type="match status" value="1"/>
</dbReference>
<dbReference type="Gene3D" id="3.40.50.720">
    <property type="entry name" value="NAD(P)-binding Rossmann-like Domain"/>
    <property type="match status" value="1"/>
</dbReference>
<dbReference type="HAMAP" id="MF_01619">
    <property type="entry name" value="NAD_malic_enz"/>
    <property type="match status" value="1"/>
</dbReference>
<dbReference type="InterPro" id="IPR046346">
    <property type="entry name" value="Aminoacid_DH-like_N_sf"/>
</dbReference>
<dbReference type="InterPro" id="IPR015884">
    <property type="entry name" value="Malic_enzyme_CS"/>
</dbReference>
<dbReference type="InterPro" id="IPR012301">
    <property type="entry name" value="Malic_N_dom"/>
</dbReference>
<dbReference type="InterPro" id="IPR037062">
    <property type="entry name" value="Malic_N_dom_sf"/>
</dbReference>
<dbReference type="InterPro" id="IPR012302">
    <property type="entry name" value="Malic_NAD-bd"/>
</dbReference>
<dbReference type="InterPro" id="IPR001891">
    <property type="entry name" value="Malic_OxRdtase"/>
</dbReference>
<dbReference type="InterPro" id="IPR036291">
    <property type="entry name" value="NAD(P)-bd_dom_sf"/>
</dbReference>
<dbReference type="InterPro" id="IPR023667">
    <property type="entry name" value="NAD_malic_enz_proteobac"/>
</dbReference>
<dbReference type="NCBIfam" id="NF010052">
    <property type="entry name" value="PRK13529.1"/>
    <property type="match status" value="1"/>
</dbReference>
<dbReference type="PANTHER" id="PTHR23406">
    <property type="entry name" value="MALIC ENZYME-RELATED"/>
    <property type="match status" value="1"/>
</dbReference>
<dbReference type="PANTHER" id="PTHR23406:SF34">
    <property type="entry name" value="NAD-DEPENDENT MALIC ENZYME, MITOCHONDRIAL"/>
    <property type="match status" value="1"/>
</dbReference>
<dbReference type="Pfam" id="PF00390">
    <property type="entry name" value="malic"/>
    <property type="match status" value="1"/>
</dbReference>
<dbReference type="Pfam" id="PF03949">
    <property type="entry name" value="Malic_M"/>
    <property type="match status" value="1"/>
</dbReference>
<dbReference type="PIRSF" id="PIRSF000106">
    <property type="entry name" value="ME"/>
    <property type="match status" value="1"/>
</dbReference>
<dbReference type="PRINTS" id="PR00072">
    <property type="entry name" value="MALOXRDTASE"/>
</dbReference>
<dbReference type="SMART" id="SM01274">
    <property type="entry name" value="malic"/>
    <property type="match status" value="1"/>
</dbReference>
<dbReference type="SMART" id="SM00919">
    <property type="entry name" value="Malic_M"/>
    <property type="match status" value="1"/>
</dbReference>
<dbReference type="SUPFAM" id="SSF53223">
    <property type="entry name" value="Aminoacid dehydrogenase-like, N-terminal domain"/>
    <property type="match status" value="1"/>
</dbReference>
<dbReference type="SUPFAM" id="SSF51735">
    <property type="entry name" value="NAD(P)-binding Rossmann-fold domains"/>
    <property type="match status" value="1"/>
</dbReference>
<dbReference type="PROSITE" id="PS00331">
    <property type="entry name" value="MALIC_ENZYMES"/>
    <property type="match status" value="1"/>
</dbReference>
<comment type="catalytic activity">
    <reaction evidence="1">
        <text>(S)-malate + NAD(+) = pyruvate + CO2 + NADH</text>
        <dbReference type="Rhea" id="RHEA:12653"/>
        <dbReference type="ChEBI" id="CHEBI:15361"/>
        <dbReference type="ChEBI" id="CHEBI:15589"/>
        <dbReference type="ChEBI" id="CHEBI:16526"/>
        <dbReference type="ChEBI" id="CHEBI:57540"/>
        <dbReference type="ChEBI" id="CHEBI:57945"/>
        <dbReference type="EC" id="1.1.1.38"/>
    </reaction>
</comment>
<comment type="catalytic activity">
    <reaction evidence="1">
        <text>oxaloacetate + H(+) = pyruvate + CO2</text>
        <dbReference type="Rhea" id="RHEA:15641"/>
        <dbReference type="ChEBI" id="CHEBI:15361"/>
        <dbReference type="ChEBI" id="CHEBI:15378"/>
        <dbReference type="ChEBI" id="CHEBI:16452"/>
        <dbReference type="ChEBI" id="CHEBI:16526"/>
        <dbReference type="EC" id="1.1.1.38"/>
    </reaction>
</comment>
<comment type="cofactor">
    <cofactor evidence="1">
        <name>Mg(2+)</name>
        <dbReference type="ChEBI" id="CHEBI:18420"/>
    </cofactor>
    <cofactor evidence="1">
        <name>Mn(2+)</name>
        <dbReference type="ChEBI" id="CHEBI:29035"/>
    </cofactor>
    <text evidence="1">Divalent metal cations. Prefers magnesium or manganese.</text>
</comment>
<comment type="subunit">
    <text evidence="1">Homotetramer.</text>
</comment>
<comment type="similarity">
    <text evidence="1">Belongs to the malic enzymes family.</text>
</comment>
<keyword id="KW-0479">Metal-binding</keyword>
<keyword id="KW-0520">NAD</keyword>
<keyword id="KW-0560">Oxidoreductase</keyword>
<gene>
    <name evidence="1" type="primary">maeA</name>
    <name type="ordered locus">CPS_4262</name>
</gene>
<sequence>MPQSQRPLYIPYAGPSLLETPLLNKGSAFSKEERGSFNLTGLLPPRFESIDEQAERAFRQYSCFQTNINKHIYLRAIHDNNETLFFKLVQNNLAEMMPIIYTPTVGDACEQFSDIYRSSRGLFISYEDRFNIDDMLRNATKNKVKVIVVTDGERILGLGDQGIGGMGIPIGKLSLYTACGGISPAHTLPVMLDVGTNNQKLLDDPMYMGARHKRIDQDSYDEFLELFISAVKRRWPNVLLQFEDFAQPNAMPLLQRYKDRICCFNDDIQGTASVTVGTLLAACRSKGSKLSELNVAFVGAGSAGCGIAEQIISQMMNEGLGAEQARSQVFMVDRFGLLTQGMGELRDFQQKLVQSNEAIAEWDIAGEFASLVEVMHGAKPDILIGVSGQAGLFTEKVITAMKSHCEMPIIFPLSNPSRQVEATPSQVINWTQGQVIIATGSPFDPIEYQGKTFPIAQCNNSYIFPGVGLAVVAANISRITDGMLQVASETLAAASPLANGESDELLPPLTSIAQLSRDIAFAIAKVAYKQGLALELTDDELLAKIEHNFWKPEYRQYRRTSL</sequence>
<protein>
    <recommendedName>
        <fullName evidence="1">NAD-dependent malic enzyme</fullName>
        <shortName evidence="1">NAD-ME</shortName>
        <ecNumber evidence="1">1.1.1.38</ecNumber>
    </recommendedName>
</protein>
<evidence type="ECO:0000255" key="1">
    <source>
        <dbReference type="HAMAP-Rule" id="MF_01619"/>
    </source>
</evidence>
<proteinExistence type="inferred from homology"/>